<protein>
    <recommendedName>
        <fullName evidence="1">Small ribosomal subunit protein uS11</fullName>
    </recommendedName>
    <alternativeName>
        <fullName evidence="2">30S ribosomal protein S11</fullName>
    </alternativeName>
</protein>
<keyword id="KW-1185">Reference proteome</keyword>
<keyword id="KW-0687">Ribonucleoprotein</keyword>
<keyword id="KW-0689">Ribosomal protein</keyword>
<keyword id="KW-0694">RNA-binding</keyword>
<keyword id="KW-0699">rRNA-binding</keyword>
<accession>Q5M2D8</accession>
<evidence type="ECO:0000255" key="1">
    <source>
        <dbReference type="HAMAP-Rule" id="MF_01310"/>
    </source>
</evidence>
<evidence type="ECO:0000305" key="2"/>
<gene>
    <name evidence="1" type="primary">rpsK</name>
    <name type="ordered locus">stu1909</name>
</gene>
<reference key="1">
    <citation type="journal article" date="2004" name="Nat. Biotechnol.">
        <title>Complete sequence and comparative genome analysis of the dairy bacterium Streptococcus thermophilus.</title>
        <authorList>
            <person name="Bolotin A."/>
            <person name="Quinquis B."/>
            <person name="Renault P."/>
            <person name="Sorokin A."/>
            <person name="Ehrlich S.D."/>
            <person name="Kulakauskas S."/>
            <person name="Lapidus A."/>
            <person name="Goltsman E."/>
            <person name="Mazur M."/>
            <person name="Pusch G.D."/>
            <person name="Fonstein M."/>
            <person name="Overbeek R."/>
            <person name="Kyprides N."/>
            <person name="Purnelle B."/>
            <person name="Prozzi D."/>
            <person name="Ngui K."/>
            <person name="Masuy D."/>
            <person name="Hancy F."/>
            <person name="Burteau S."/>
            <person name="Boutry M."/>
            <person name="Delcour J."/>
            <person name="Goffeau A."/>
            <person name="Hols P."/>
        </authorList>
    </citation>
    <scope>NUCLEOTIDE SEQUENCE [LARGE SCALE GENOMIC DNA]</scope>
    <source>
        <strain>ATCC BAA-250 / LMG 18311</strain>
    </source>
</reference>
<name>RS11_STRT2</name>
<organism>
    <name type="scientific">Streptococcus thermophilus (strain ATCC BAA-250 / LMG 18311)</name>
    <dbReference type="NCBI Taxonomy" id="264199"/>
    <lineage>
        <taxon>Bacteria</taxon>
        <taxon>Bacillati</taxon>
        <taxon>Bacillota</taxon>
        <taxon>Bacilli</taxon>
        <taxon>Lactobacillales</taxon>
        <taxon>Streptococcaceae</taxon>
        <taxon>Streptococcus</taxon>
    </lineage>
</organism>
<feature type="chain" id="PRO_0000230435" description="Small ribosomal subunit protein uS11">
    <location>
        <begin position="1"/>
        <end position="127"/>
    </location>
</feature>
<sequence>MAKPTRKRRVKKNIESGIAHIHATFNNTIVMITDVHGNAVAWSSAGALGFKGSRKSTPFAAQMASEAAAKSAQEHGLKTVEVTVKGPGSGRESAIRALAAAGLEVTAIRDVTPVPHNGARPPKRRRV</sequence>
<dbReference type="EMBL" id="CP000023">
    <property type="protein sequence ID" value="AAV61507.1"/>
    <property type="molecule type" value="Genomic_DNA"/>
</dbReference>
<dbReference type="RefSeq" id="WP_002887520.1">
    <property type="nucleotide sequence ID" value="NC_006448.1"/>
</dbReference>
<dbReference type="SMR" id="Q5M2D8"/>
<dbReference type="STRING" id="264199.stu1909"/>
<dbReference type="GeneID" id="66899637"/>
<dbReference type="KEGG" id="stl:stu1909"/>
<dbReference type="eggNOG" id="COG0100">
    <property type="taxonomic scope" value="Bacteria"/>
</dbReference>
<dbReference type="HOGENOM" id="CLU_072439_5_0_9"/>
<dbReference type="Proteomes" id="UP000001170">
    <property type="component" value="Chromosome"/>
</dbReference>
<dbReference type="GO" id="GO:1990904">
    <property type="term" value="C:ribonucleoprotein complex"/>
    <property type="evidence" value="ECO:0007669"/>
    <property type="project" value="UniProtKB-KW"/>
</dbReference>
<dbReference type="GO" id="GO:0005840">
    <property type="term" value="C:ribosome"/>
    <property type="evidence" value="ECO:0007669"/>
    <property type="project" value="UniProtKB-KW"/>
</dbReference>
<dbReference type="GO" id="GO:0019843">
    <property type="term" value="F:rRNA binding"/>
    <property type="evidence" value="ECO:0007669"/>
    <property type="project" value="UniProtKB-UniRule"/>
</dbReference>
<dbReference type="GO" id="GO:0003735">
    <property type="term" value="F:structural constituent of ribosome"/>
    <property type="evidence" value="ECO:0007669"/>
    <property type="project" value="InterPro"/>
</dbReference>
<dbReference type="GO" id="GO:0006412">
    <property type="term" value="P:translation"/>
    <property type="evidence" value="ECO:0007669"/>
    <property type="project" value="UniProtKB-UniRule"/>
</dbReference>
<dbReference type="FunFam" id="3.30.420.80:FF:000001">
    <property type="entry name" value="30S ribosomal protein S11"/>
    <property type="match status" value="1"/>
</dbReference>
<dbReference type="Gene3D" id="3.30.420.80">
    <property type="entry name" value="Ribosomal protein S11"/>
    <property type="match status" value="1"/>
</dbReference>
<dbReference type="HAMAP" id="MF_01310">
    <property type="entry name" value="Ribosomal_uS11"/>
    <property type="match status" value="1"/>
</dbReference>
<dbReference type="InterPro" id="IPR001971">
    <property type="entry name" value="Ribosomal_uS11"/>
</dbReference>
<dbReference type="InterPro" id="IPR019981">
    <property type="entry name" value="Ribosomal_uS11_bac-type"/>
</dbReference>
<dbReference type="InterPro" id="IPR018102">
    <property type="entry name" value="Ribosomal_uS11_CS"/>
</dbReference>
<dbReference type="InterPro" id="IPR036967">
    <property type="entry name" value="Ribosomal_uS11_sf"/>
</dbReference>
<dbReference type="NCBIfam" id="NF003698">
    <property type="entry name" value="PRK05309.1"/>
    <property type="match status" value="1"/>
</dbReference>
<dbReference type="NCBIfam" id="TIGR03632">
    <property type="entry name" value="uS11_bact"/>
    <property type="match status" value="1"/>
</dbReference>
<dbReference type="PANTHER" id="PTHR11759">
    <property type="entry name" value="40S RIBOSOMAL PROTEIN S14/30S RIBOSOMAL PROTEIN S11"/>
    <property type="match status" value="1"/>
</dbReference>
<dbReference type="Pfam" id="PF00411">
    <property type="entry name" value="Ribosomal_S11"/>
    <property type="match status" value="1"/>
</dbReference>
<dbReference type="PIRSF" id="PIRSF002131">
    <property type="entry name" value="Ribosomal_S11"/>
    <property type="match status" value="1"/>
</dbReference>
<dbReference type="SUPFAM" id="SSF53137">
    <property type="entry name" value="Translational machinery components"/>
    <property type="match status" value="1"/>
</dbReference>
<dbReference type="PROSITE" id="PS00054">
    <property type="entry name" value="RIBOSOMAL_S11"/>
    <property type="match status" value="1"/>
</dbReference>
<comment type="function">
    <text evidence="1">Located on the platform of the 30S subunit, it bridges several disparate RNA helices of the 16S rRNA. Forms part of the Shine-Dalgarno cleft in the 70S ribosome.</text>
</comment>
<comment type="subunit">
    <text evidence="1">Part of the 30S ribosomal subunit. Interacts with proteins S7 and S18. Binds to IF-3.</text>
</comment>
<comment type="similarity">
    <text evidence="1">Belongs to the universal ribosomal protein uS11 family.</text>
</comment>
<proteinExistence type="inferred from homology"/>